<proteinExistence type="inferred from homology"/>
<name>RL30_BACCR</name>
<dbReference type="EMBL" id="AE016877">
    <property type="protein sequence ID" value="AAP07230.1"/>
    <property type="molecule type" value="Genomic_DNA"/>
</dbReference>
<dbReference type="RefSeq" id="NP_830029.1">
    <property type="nucleotide sequence ID" value="NC_004722.1"/>
</dbReference>
<dbReference type="RefSeq" id="WP_001085234.1">
    <property type="nucleotide sequence ID" value="NZ_CP138336.1"/>
</dbReference>
<dbReference type="SMR" id="Q81J24"/>
<dbReference type="STRING" id="226900.BC_0149"/>
<dbReference type="GeneID" id="93010925"/>
<dbReference type="KEGG" id="bce:BC0149"/>
<dbReference type="PATRIC" id="fig|226900.8.peg.150"/>
<dbReference type="HOGENOM" id="CLU_131047_2_1_9"/>
<dbReference type="OrthoDB" id="9812790at2"/>
<dbReference type="PRO" id="PR:Q81J24"/>
<dbReference type="Proteomes" id="UP000001417">
    <property type="component" value="Chromosome"/>
</dbReference>
<dbReference type="GO" id="GO:0022625">
    <property type="term" value="C:cytosolic large ribosomal subunit"/>
    <property type="evidence" value="ECO:0000318"/>
    <property type="project" value="GO_Central"/>
</dbReference>
<dbReference type="GO" id="GO:0003735">
    <property type="term" value="F:structural constituent of ribosome"/>
    <property type="evidence" value="ECO:0007669"/>
    <property type="project" value="InterPro"/>
</dbReference>
<dbReference type="GO" id="GO:0006412">
    <property type="term" value="P:translation"/>
    <property type="evidence" value="ECO:0007669"/>
    <property type="project" value="UniProtKB-UniRule"/>
</dbReference>
<dbReference type="CDD" id="cd01658">
    <property type="entry name" value="Ribosomal_L30"/>
    <property type="match status" value="1"/>
</dbReference>
<dbReference type="FunFam" id="3.30.1390.20:FF:000001">
    <property type="entry name" value="50S ribosomal protein L30"/>
    <property type="match status" value="1"/>
</dbReference>
<dbReference type="Gene3D" id="3.30.1390.20">
    <property type="entry name" value="Ribosomal protein L30, ferredoxin-like fold domain"/>
    <property type="match status" value="1"/>
</dbReference>
<dbReference type="HAMAP" id="MF_01371_B">
    <property type="entry name" value="Ribosomal_uL30_B"/>
    <property type="match status" value="1"/>
</dbReference>
<dbReference type="InterPro" id="IPR036919">
    <property type="entry name" value="Ribo_uL30_ferredoxin-like_sf"/>
</dbReference>
<dbReference type="InterPro" id="IPR005996">
    <property type="entry name" value="Ribosomal_uL30_bac-type"/>
</dbReference>
<dbReference type="InterPro" id="IPR018038">
    <property type="entry name" value="Ribosomal_uL30_CS"/>
</dbReference>
<dbReference type="InterPro" id="IPR016082">
    <property type="entry name" value="Ribosomal_uL30_ferredoxin-like"/>
</dbReference>
<dbReference type="NCBIfam" id="TIGR01308">
    <property type="entry name" value="rpmD_bact"/>
    <property type="match status" value="1"/>
</dbReference>
<dbReference type="PANTHER" id="PTHR15892:SF2">
    <property type="entry name" value="LARGE RIBOSOMAL SUBUNIT PROTEIN UL30M"/>
    <property type="match status" value="1"/>
</dbReference>
<dbReference type="PANTHER" id="PTHR15892">
    <property type="entry name" value="MITOCHONDRIAL RIBOSOMAL PROTEIN L30"/>
    <property type="match status" value="1"/>
</dbReference>
<dbReference type="Pfam" id="PF00327">
    <property type="entry name" value="Ribosomal_L30"/>
    <property type="match status" value="1"/>
</dbReference>
<dbReference type="PIRSF" id="PIRSF002211">
    <property type="entry name" value="Ribosomal_L30_bac-type"/>
    <property type="match status" value="1"/>
</dbReference>
<dbReference type="SUPFAM" id="SSF55129">
    <property type="entry name" value="Ribosomal protein L30p/L7e"/>
    <property type="match status" value="1"/>
</dbReference>
<dbReference type="PROSITE" id="PS00634">
    <property type="entry name" value="RIBOSOMAL_L30"/>
    <property type="match status" value="1"/>
</dbReference>
<organism>
    <name type="scientific">Bacillus cereus (strain ATCC 14579 / DSM 31 / CCUG 7414 / JCM 2152 / NBRC 15305 / NCIMB 9373 / NCTC 2599 / NRRL B-3711)</name>
    <dbReference type="NCBI Taxonomy" id="226900"/>
    <lineage>
        <taxon>Bacteria</taxon>
        <taxon>Bacillati</taxon>
        <taxon>Bacillota</taxon>
        <taxon>Bacilli</taxon>
        <taxon>Bacillales</taxon>
        <taxon>Bacillaceae</taxon>
        <taxon>Bacillus</taxon>
        <taxon>Bacillus cereus group</taxon>
    </lineage>
</organism>
<protein>
    <recommendedName>
        <fullName evidence="1">Large ribosomal subunit protein uL30</fullName>
    </recommendedName>
    <alternativeName>
        <fullName evidence="2">50S ribosomal protein L30</fullName>
    </alternativeName>
</protein>
<reference key="1">
    <citation type="journal article" date="2003" name="Nature">
        <title>Genome sequence of Bacillus cereus and comparative analysis with Bacillus anthracis.</title>
        <authorList>
            <person name="Ivanova N."/>
            <person name="Sorokin A."/>
            <person name="Anderson I."/>
            <person name="Galleron N."/>
            <person name="Candelon B."/>
            <person name="Kapatral V."/>
            <person name="Bhattacharyya A."/>
            <person name="Reznik G."/>
            <person name="Mikhailova N."/>
            <person name="Lapidus A."/>
            <person name="Chu L."/>
            <person name="Mazur M."/>
            <person name="Goltsman E."/>
            <person name="Larsen N."/>
            <person name="D'Souza M."/>
            <person name="Walunas T."/>
            <person name="Grechkin Y."/>
            <person name="Pusch G."/>
            <person name="Haselkorn R."/>
            <person name="Fonstein M."/>
            <person name="Ehrlich S.D."/>
            <person name="Overbeek R."/>
            <person name="Kyrpides N.C."/>
        </authorList>
    </citation>
    <scope>NUCLEOTIDE SEQUENCE [LARGE SCALE GENOMIC DNA]</scope>
    <source>
        <strain>ATCC 14579 / DSM 31 / CCUG 7414 / JCM 2152 / NBRC 15305 / NCIMB 9373 / NCTC 2599 / NRRL B-3711</strain>
    </source>
</reference>
<keyword id="KW-1185">Reference proteome</keyword>
<keyword id="KW-0687">Ribonucleoprotein</keyword>
<keyword id="KW-0689">Ribosomal protein</keyword>
<comment type="subunit">
    <text evidence="1">Part of the 50S ribosomal subunit.</text>
</comment>
<comment type="similarity">
    <text evidence="1">Belongs to the universal ribosomal protein uL30 family.</text>
</comment>
<accession>Q81J24</accession>
<evidence type="ECO:0000255" key="1">
    <source>
        <dbReference type="HAMAP-Rule" id="MF_01371"/>
    </source>
</evidence>
<evidence type="ECO:0000305" key="2"/>
<feature type="chain" id="PRO_0000273742" description="Large ribosomal subunit protein uL30">
    <location>
        <begin position="1"/>
        <end position="60"/>
    </location>
</feature>
<gene>
    <name evidence="1" type="primary">rpmD</name>
    <name type="ordered locus">BC_0149</name>
</gene>
<sequence length="60" mass="6556">MAKKLEITLTRSVIGRPQDQRATVEALGLKKLNSTVVKEETPAILGMINKVSHLVTVKEA</sequence>